<keyword id="KW-0963">Cytoplasm</keyword>
<keyword id="KW-1185">Reference proteome</keyword>
<keyword id="KW-0833">Ubl conjugation pathway</keyword>
<feature type="chain" id="PRO_0000119978" description="F-box protein pof13">
    <location>
        <begin position="1"/>
        <end position="396"/>
    </location>
</feature>
<feature type="domain" description="F-box">
    <location>
        <begin position="40"/>
        <end position="89"/>
    </location>
</feature>
<gene>
    <name type="primary">pof13</name>
    <name type="ORF">SPBC1271.01c</name>
</gene>
<comment type="pathway">
    <text>Protein modification; protein ubiquitination.</text>
</comment>
<comment type="subunit">
    <text evidence="1 2">Part of a SCF (SKP1-cullin-F-box) protein ligase complex (By similarity). Interacts with skp1.</text>
</comment>
<comment type="subcellular location">
    <subcellularLocation>
        <location evidence="3">Cytoplasm</location>
    </subcellularLocation>
</comment>
<proteinExistence type="evidence at protein level"/>
<accession>O94334</accession>
<name>POF13_SCHPO</name>
<organism>
    <name type="scientific">Schizosaccharomyces pombe (strain 972 / ATCC 24843)</name>
    <name type="common">Fission yeast</name>
    <dbReference type="NCBI Taxonomy" id="284812"/>
    <lineage>
        <taxon>Eukaryota</taxon>
        <taxon>Fungi</taxon>
        <taxon>Dikarya</taxon>
        <taxon>Ascomycota</taxon>
        <taxon>Taphrinomycotina</taxon>
        <taxon>Schizosaccharomycetes</taxon>
        <taxon>Schizosaccharomycetales</taxon>
        <taxon>Schizosaccharomycetaceae</taxon>
        <taxon>Schizosaccharomyces</taxon>
    </lineage>
</organism>
<protein>
    <recommendedName>
        <fullName>F-box protein pof13</fullName>
    </recommendedName>
</protein>
<dbReference type="EMBL" id="AB062275">
    <property type="protein sequence ID" value="BAB55892.1"/>
    <property type="molecule type" value="Genomic_DNA"/>
</dbReference>
<dbReference type="EMBL" id="CU329671">
    <property type="protein sequence ID" value="CAA22191.1"/>
    <property type="molecule type" value="Genomic_DNA"/>
</dbReference>
<dbReference type="PIR" id="T39337">
    <property type="entry name" value="T39337"/>
</dbReference>
<dbReference type="RefSeq" id="NP_595149.1">
    <property type="nucleotide sequence ID" value="NM_001021057.2"/>
</dbReference>
<dbReference type="BioGRID" id="276720">
    <property type="interactions" value="24"/>
</dbReference>
<dbReference type="IntAct" id="O94334">
    <property type="interactions" value="1"/>
</dbReference>
<dbReference type="STRING" id="284812.O94334"/>
<dbReference type="PaxDb" id="4896-SPBC1271.01c.1"/>
<dbReference type="EnsemblFungi" id="SPBC1271.01c.1">
    <property type="protein sequence ID" value="SPBC1271.01c.1:pep"/>
    <property type="gene ID" value="SPBC1271.01c"/>
</dbReference>
<dbReference type="GeneID" id="2540187"/>
<dbReference type="KEGG" id="spo:2540187"/>
<dbReference type="PomBase" id="SPBC1271.01c">
    <property type="gene designation" value="pof13"/>
</dbReference>
<dbReference type="VEuPathDB" id="FungiDB:SPBC1271.01c"/>
<dbReference type="HOGENOM" id="CLU_685421_0_0_1"/>
<dbReference type="InParanoid" id="O94334"/>
<dbReference type="OMA" id="CPLNACK"/>
<dbReference type="UniPathway" id="UPA00143"/>
<dbReference type="PRO" id="PR:O94334"/>
<dbReference type="Proteomes" id="UP000002485">
    <property type="component" value="Chromosome II"/>
</dbReference>
<dbReference type="GO" id="GO:0005829">
    <property type="term" value="C:cytosol"/>
    <property type="evidence" value="ECO:0007005"/>
    <property type="project" value="PomBase"/>
</dbReference>
<dbReference type="GO" id="GO:0000151">
    <property type="term" value="C:ubiquitin ligase complex"/>
    <property type="evidence" value="ECO:0000255"/>
    <property type="project" value="PomBase"/>
</dbReference>
<dbReference type="GO" id="GO:1990756">
    <property type="term" value="F:ubiquitin-like ligase-substrate adaptor activity"/>
    <property type="evidence" value="ECO:0000255"/>
    <property type="project" value="PomBase"/>
</dbReference>
<dbReference type="GO" id="GO:0016567">
    <property type="term" value="P:protein ubiquitination"/>
    <property type="evidence" value="ECO:0007669"/>
    <property type="project" value="UniProtKB-UniPathway"/>
</dbReference>
<dbReference type="GO" id="GO:0006511">
    <property type="term" value="P:ubiquitin-dependent protein catabolic process"/>
    <property type="evidence" value="ECO:0000304"/>
    <property type="project" value="PomBase"/>
</dbReference>
<dbReference type="InterPro" id="IPR036047">
    <property type="entry name" value="F-box-like_dom_sf"/>
</dbReference>
<dbReference type="InterPro" id="IPR001810">
    <property type="entry name" value="F-box_dom"/>
</dbReference>
<dbReference type="Pfam" id="PF00646">
    <property type="entry name" value="F-box"/>
    <property type="match status" value="1"/>
</dbReference>
<dbReference type="SUPFAM" id="SSF81383">
    <property type="entry name" value="F-box domain"/>
    <property type="match status" value="1"/>
</dbReference>
<evidence type="ECO:0000250" key="1"/>
<evidence type="ECO:0000269" key="2">
    <source>
    </source>
</evidence>
<evidence type="ECO:0000269" key="3">
    <source>
    </source>
</evidence>
<reference key="1">
    <citation type="submission" date="2001-05" db="EMBL/GenBank/DDBJ databases">
        <title>Systematic genome-wide analysis of F-box protein-encoding genes in fission yeast.</title>
        <authorList>
            <person name="Harrison C.L."/>
            <person name="Toda T."/>
        </authorList>
    </citation>
    <scope>NUCLEOTIDE SEQUENCE [GENOMIC DNA]</scope>
</reference>
<reference key="2">
    <citation type="journal article" date="2002" name="Nature">
        <title>The genome sequence of Schizosaccharomyces pombe.</title>
        <authorList>
            <person name="Wood V."/>
            <person name="Gwilliam R."/>
            <person name="Rajandream M.A."/>
            <person name="Lyne M.H."/>
            <person name="Lyne R."/>
            <person name="Stewart A."/>
            <person name="Sgouros J.G."/>
            <person name="Peat N."/>
            <person name="Hayles J."/>
            <person name="Baker S.G."/>
            <person name="Basham D."/>
            <person name="Bowman S."/>
            <person name="Brooks K."/>
            <person name="Brown D."/>
            <person name="Brown S."/>
            <person name="Chillingworth T."/>
            <person name="Churcher C.M."/>
            <person name="Collins M."/>
            <person name="Connor R."/>
            <person name="Cronin A."/>
            <person name="Davis P."/>
            <person name="Feltwell T."/>
            <person name="Fraser A."/>
            <person name="Gentles S."/>
            <person name="Goble A."/>
            <person name="Hamlin N."/>
            <person name="Harris D.E."/>
            <person name="Hidalgo J."/>
            <person name="Hodgson G."/>
            <person name="Holroyd S."/>
            <person name="Hornsby T."/>
            <person name="Howarth S."/>
            <person name="Huckle E.J."/>
            <person name="Hunt S."/>
            <person name="Jagels K."/>
            <person name="James K.D."/>
            <person name="Jones L."/>
            <person name="Jones M."/>
            <person name="Leather S."/>
            <person name="McDonald S."/>
            <person name="McLean J."/>
            <person name="Mooney P."/>
            <person name="Moule S."/>
            <person name="Mungall K.L."/>
            <person name="Murphy L.D."/>
            <person name="Niblett D."/>
            <person name="Odell C."/>
            <person name="Oliver K."/>
            <person name="O'Neil S."/>
            <person name="Pearson D."/>
            <person name="Quail M.A."/>
            <person name="Rabbinowitsch E."/>
            <person name="Rutherford K.M."/>
            <person name="Rutter S."/>
            <person name="Saunders D."/>
            <person name="Seeger K."/>
            <person name="Sharp S."/>
            <person name="Skelton J."/>
            <person name="Simmonds M.N."/>
            <person name="Squares R."/>
            <person name="Squares S."/>
            <person name="Stevens K."/>
            <person name="Taylor K."/>
            <person name="Taylor R.G."/>
            <person name="Tivey A."/>
            <person name="Walsh S.V."/>
            <person name="Warren T."/>
            <person name="Whitehead S."/>
            <person name="Woodward J.R."/>
            <person name="Volckaert G."/>
            <person name="Aert R."/>
            <person name="Robben J."/>
            <person name="Grymonprez B."/>
            <person name="Weltjens I."/>
            <person name="Vanstreels E."/>
            <person name="Rieger M."/>
            <person name="Schaefer M."/>
            <person name="Mueller-Auer S."/>
            <person name="Gabel C."/>
            <person name="Fuchs M."/>
            <person name="Duesterhoeft A."/>
            <person name="Fritzc C."/>
            <person name="Holzer E."/>
            <person name="Moestl D."/>
            <person name="Hilbert H."/>
            <person name="Borzym K."/>
            <person name="Langer I."/>
            <person name="Beck A."/>
            <person name="Lehrach H."/>
            <person name="Reinhardt R."/>
            <person name="Pohl T.M."/>
            <person name="Eger P."/>
            <person name="Zimmermann W."/>
            <person name="Wedler H."/>
            <person name="Wambutt R."/>
            <person name="Purnelle B."/>
            <person name="Goffeau A."/>
            <person name="Cadieu E."/>
            <person name="Dreano S."/>
            <person name="Gloux S."/>
            <person name="Lelaure V."/>
            <person name="Mottier S."/>
            <person name="Galibert F."/>
            <person name="Aves S.J."/>
            <person name="Xiang Z."/>
            <person name="Hunt C."/>
            <person name="Moore K."/>
            <person name="Hurst S.M."/>
            <person name="Lucas M."/>
            <person name="Rochet M."/>
            <person name="Gaillardin C."/>
            <person name="Tallada V.A."/>
            <person name="Garzon A."/>
            <person name="Thode G."/>
            <person name="Daga R.R."/>
            <person name="Cruzado L."/>
            <person name="Jimenez J."/>
            <person name="Sanchez M."/>
            <person name="del Rey F."/>
            <person name="Benito J."/>
            <person name="Dominguez A."/>
            <person name="Revuelta J.L."/>
            <person name="Moreno S."/>
            <person name="Armstrong J."/>
            <person name="Forsburg S.L."/>
            <person name="Cerutti L."/>
            <person name="Lowe T."/>
            <person name="McCombie W.R."/>
            <person name="Paulsen I."/>
            <person name="Potashkin J."/>
            <person name="Shpakovski G.V."/>
            <person name="Ussery D."/>
            <person name="Barrell B.G."/>
            <person name="Nurse P."/>
        </authorList>
    </citation>
    <scope>NUCLEOTIDE SEQUENCE [LARGE SCALE GENOMIC DNA]</scope>
    <source>
        <strain>972 / ATCC 24843</strain>
    </source>
</reference>
<reference key="3">
    <citation type="journal article" date="2004" name="Genes Cells">
        <title>Molecular interactions of fission yeast Skp1 and its role in the DNA damage checkpoint.</title>
        <authorList>
            <person name="Lehmann A."/>
            <person name="Katayama S."/>
            <person name="Harrison C."/>
            <person name="Dhut S."/>
            <person name="Kitamura K."/>
            <person name="McDonald N."/>
            <person name="Toda T."/>
        </authorList>
    </citation>
    <scope>INTERACTION WITH SKP1</scope>
</reference>
<reference key="4">
    <citation type="journal article" date="2006" name="Nat. Biotechnol.">
        <title>ORFeome cloning and global analysis of protein localization in the fission yeast Schizosaccharomyces pombe.</title>
        <authorList>
            <person name="Matsuyama A."/>
            <person name="Arai R."/>
            <person name="Yashiroda Y."/>
            <person name="Shirai A."/>
            <person name="Kamata A."/>
            <person name="Sekido S."/>
            <person name="Kobayashi Y."/>
            <person name="Hashimoto A."/>
            <person name="Hamamoto M."/>
            <person name="Hiraoka Y."/>
            <person name="Horinouchi S."/>
            <person name="Yoshida M."/>
        </authorList>
    </citation>
    <scope>SUBCELLULAR LOCATION [LARGE SCALE ANALYSIS]</scope>
</reference>
<sequence>MRPTHWSSNQCEVDFTAEALTTLSLSNRNHEEDPIQPVLKNSNLFLLNRDIWSLIINYLDAFDILRLMHSSRQFYYWLRKSAVDECCFNNNFLNLQPYQRTVPVASDLEWATEVDLYGNPPILKLQLRDSFVWSMLAKFQGLQTIALDGTGVTISSVTNILLNIPTVKTLSIRWCVGVCSLSLIEFLQNSKSRTFSLENLYVLGVKGLELLKPVLLDGSEDDTLTSNWHSRVILFQNALDALPTTHGNPVECDISRCPLNACKIAGQETELADLFSLQKVPACIYCLREWKKPICRYCIDLRSCLVCDSFVCPSCISLDFDLQIQAFARQHRVISTLGVVYPEREDSCFHKIKAAQWHQISPRSLLFQFQEQNHIHHKKIRRKLLAAGWKWPQSQI</sequence>